<dbReference type="EMBL" id="CP000266">
    <property type="protein sequence ID" value="ABF05231.1"/>
    <property type="status" value="ALT_INIT"/>
    <property type="molecule type" value="Genomic_DNA"/>
</dbReference>
<dbReference type="RefSeq" id="WP_000249125.1">
    <property type="nucleotide sequence ID" value="NC_008258.1"/>
</dbReference>
<dbReference type="BMRB" id="Q0T0D4"/>
<dbReference type="SMR" id="Q0T0D4"/>
<dbReference type="KEGG" id="sfv:SFV_3177"/>
<dbReference type="HOGENOM" id="CLU_026091_1_1_6"/>
<dbReference type="Proteomes" id="UP000000659">
    <property type="component" value="Chromosome"/>
</dbReference>
<dbReference type="GO" id="GO:0031241">
    <property type="term" value="C:periplasmic side of cell outer membrane"/>
    <property type="evidence" value="ECO:0007669"/>
    <property type="project" value="UniProtKB-UniRule"/>
</dbReference>
<dbReference type="GO" id="GO:0042597">
    <property type="term" value="C:periplasmic space"/>
    <property type="evidence" value="ECO:0007669"/>
    <property type="project" value="InterPro"/>
</dbReference>
<dbReference type="GO" id="GO:0030234">
    <property type="term" value="F:enzyme regulator activity"/>
    <property type="evidence" value="ECO:0007669"/>
    <property type="project" value="UniProtKB-UniRule"/>
</dbReference>
<dbReference type="GO" id="GO:0004553">
    <property type="term" value="F:hydrolase activity, hydrolyzing O-glycosyl compounds"/>
    <property type="evidence" value="ECO:0007669"/>
    <property type="project" value="InterPro"/>
</dbReference>
<dbReference type="GO" id="GO:0009252">
    <property type="term" value="P:peptidoglycan biosynthetic process"/>
    <property type="evidence" value="ECO:0007669"/>
    <property type="project" value="UniProtKB-UniRule"/>
</dbReference>
<dbReference type="GO" id="GO:0008360">
    <property type="term" value="P:regulation of cell shape"/>
    <property type="evidence" value="ECO:0007669"/>
    <property type="project" value="UniProtKB-KW"/>
</dbReference>
<dbReference type="CDD" id="cd06339">
    <property type="entry name" value="PBP1_YraM_LppC_lipoprotein-like"/>
    <property type="match status" value="1"/>
</dbReference>
<dbReference type="FunFam" id="1.25.40.10:FF:000199">
    <property type="entry name" value="Penicillin-binding protein activator LpoA"/>
    <property type="match status" value="1"/>
</dbReference>
<dbReference type="FunFam" id="1.25.40.650:FF:000001">
    <property type="entry name" value="Penicillin-binding protein activator LpoA"/>
    <property type="match status" value="1"/>
</dbReference>
<dbReference type="Gene3D" id="1.25.40.650">
    <property type="match status" value="1"/>
</dbReference>
<dbReference type="Gene3D" id="3.40.50.2300">
    <property type="match status" value="2"/>
</dbReference>
<dbReference type="Gene3D" id="1.25.40.10">
    <property type="entry name" value="Tetratricopeptide repeat domain"/>
    <property type="match status" value="1"/>
</dbReference>
<dbReference type="HAMAP" id="MF_01890">
    <property type="entry name" value="LpoA"/>
    <property type="match status" value="1"/>
</dbReference>
<dbReference type="InterPro" id="IPR007443">
    <property type="entry name" value="LpoA"/>
</dbReference>
<dbReference type="InterPro" id="IPR008939">
    <property type="entry name" value="Lytic_TGlycosylase_superhlx_U"/>
</dbReference>
<dbReference type="InterPro" id="IPR028082">
    <property type="entry name" value="Peripla_BP_I"/>
</dbReference>
<dbReference type="InterPro" id="IPR011990">
    <property type="entry name" value="TPR-like_helical_dom_sf"/>
</dbReference>
<dbReference type="PANTHER" id="PTHR38038">
    <property type="entry name" value="PENICILLIN-BINDING PROTEIN ACTIVATOR LPOA"/>
    <property type="match status" value="1"/>
</dbReference>
<dbReference type="PANTHER" id="PTHR38038:SF1">
    <property type="entry name" value="PENICILLIN-BINDING PROTEIN ACTIVATOR LPOA"/>
    <property type="match status" value="1"/>
</dbReference>
<dbReference type="Pfam" id="PF04348">
    <property type="entry name" value="LppC"/>
    <property type="match status" value="2"/>
</dbReference>
<dbReference type="SUPFAM" id="SSF48435">
    <property type="entry name" value="Bacterial muramidases"/>
    <property type="match status" value="1"/>
</dbReference>
<dbReference type="SUPFAM" id="SSF53822">
    <property type="entry name" value="Periplasmic binding protein-like I"/>
    <property type="match status" value="1"/>
</dbReference>
<reference key="1">
    <citation type="journal article" date="2006" name="BMC Genomics">
        <title>Complete genome sequence of Shigella flexneri 5b and comparison with Shigella flexneri 2a.</title>
        <authorList>
            <person name="Nie H."/>
            <person name="Yang F."/>
            <person name="Zhang X."/>
            <person name="Yang J."/>
            <person name="Chen L."/>
            <person name="Wang J."/>
            <person name="Xiong Z."/>
            <person name="Peng J."/>
            <person name="Sun L."/>
            <person name="Dong J."/>
            <person name="Xue Y."/>
            <person name="Xu X."/>
            <person name="Chen S."/>
            <person name="Yao Z."/>
            <person name="Shen Y."/>
            <person name="Jin Q."/>
        </authorList>
    </citation>
    <scope>NUCLEOTIDE SEQUENCE [LARGE SCALE GENOMIC DNA]</scope>
    <source>
        <strain>8401</strain>
    </source>
</reference>
<name>LPOA_SHIF8</name>
<evidence type="ECO:0000255" key="1">
    <source>
        <dbReference type="HAMAP-Rule" id="MF_01890"/>
    </source>
</evidence>
<evidence type="ECO:0000256" key="2">
    <source>
        <dbReference type="SAM" id="MobiDB-lite"/>
    </source>
</evidence>
<evidence type="ECO:0000305" key="3"/>
<protein>
    <recommendedName>
        <fullName evidence="1">Penicillin-binding protein activator LpoA</fullName>
        <shortName evidence="1">PBP activator LpoA</shortName>
    </recommendedName>
</protein>
<organism>
    <name type="scientific">Shigella flexneri serotype 5b (strain 8401)</name>
    <dbReference type="NCBI Taxonomy" id="373384"/>
    <lineage>
        <taxon>Bacteria</taxon>
        <taxon>Pseudomonadati</taxon>
        <taxon>Pseudomonadota</taxon>
        <taxon>Gammaproteobacteria</taxon>
        <taxon>Enterobacterales</taxon>
        <taxon>Enterobacteriaceae</taxon>
        <taxon>Shigella</taxon>
    </lineage>
</organism>
<accession>Q0T0D4</accession>
<sequence length="678" mass="72725">MVPSTFSRLKAARCLPVVLAALIFAGCGTHTPDQSTAYMQGTAQADSAFYLQQMQQSSDDTRINWQLLAIRALVKEGKTGQAVELFNQLPQELNDSQRREKTLLAAEIKLAQKDFAGAQNLLAKITPADLEQNQQARYWQAKIDASQGRPSIDLLRALIAQEPLLGAKEKQQNIDATWQALSSMTQEQANTLVINADENILQGWLDLQRVWFDNRNDPDMMKAGIADWQKRYPNNPGAKMLPTQLVNVKAFKPASTNKIALLLPLNGQAAVFGRTIQQGFEAAKNIGTQPVAAQVAAAPAADVAEQPQPQTADGVASPAQASVSDLTGDQPAAQPVPVSAPATSTAAVSAPANPSAELKIYDTSSQPLSQILSQVQQDGASIVVGPLLKNNVEELLKSNTPLNVLALNQPENIENRVNICYFALSPEDEARDAARHIRDQGKQAPLVLIPRSALGDRVANAFAQEWQKLGGGTVLQQKFGSTSELRAGVNGGSGIALTGSPITPRATTDSGMTTNNPTLQTTPTDDQFTNNGGRVDAVYIVATPGEIAFIKPMIAMRNGSQSGATLYASSRSAQGTAGPDFRLEMEGLQYSEIPMLAGGNLPLMQQALSAVNNDYSLARMYAMGVDAWSLANHFSQMRQVQGFEINGNTGSLTANPDCVINRKLSWLQYQQGQVVPAS</sequence>
<comment type="function">
    <text evidence="1">Regulator of peptidoglycan synthesis that is essential for the function of penicillin-binding protein 1A (PBP1a).</text>
</comment>
<comment type="subunit">
    <text evidence="1">Interacts with PBP1a.</text>
</comment>
<comment type="subcellular location">
    <subcellularLocation>
        <location evidence="1">Cell outer membrane</location>
        <topology evidence="1">Lipid-anchor</topology>
        <orientation evidence="1">Periplasmic side</orientation>
    </subcellularLocation>
</comment>
<comment type="similarity">
    <text evidence="1">Belongs to the LpoA family.</text>
</comment>
<comment type="sequence caution" evidence="3">
    <conflict type="erroneous initiation">
        <sequence resource="EMBL-CDS" id="ABF05231"/>
    </conflict>
    <text>Extended N-terminus.</text>
</comment>
<keyword id="KW-0998">Cell outer membrane</keyword>
<keyword id="KW-0133">Cell shape</keyword>
<keyword id="KW-0449">Lipoprotein</keyword>
<keyword id="KW-0472">Membrane</keyword>
<keyword id="KW-0564">Palmitate</keyword>
<keyword id="KW-0573">Peptidoglycan synthesis</keyword>
<keyword id="KW-0732">Signal</keyword>
<gene>
    <name evidence="1" type="primary">lpoA</name>
    <name type="ordered locus">SFV_3177</name>
</gene>
<proteinExistence type="inferred from homology"/>
<feature type="signal peptide" evidence="1">
    <location>
        <begin position="1"/>
        <end position="26"/>
    </location>
</feature>
<feature type="chain" id="PRO_0000405942" description="Penicillin-binding protein activator LpoA">
    <location>
        <begin position="27"/>
        <end position="678"/>
    </location>
</feature>
<feature type="region of interest" description="Disordered" evidence="2">
    <location>
        <begin position="300"/>
        <end position="340"/>
    </location>
</feature>
<feature type="region of interest" description="Disordered" evidence="2">
    <location>
        <begin position="496"/>
        <end position="528"/>
    </location>
</feature>
<feature type="compositionally biased region" description="Low complexity" evidence="2">
    <location>
        <begin position="300"/>
        <end position="310"/>
    </location>
</feature>
<feature type="compositionally biased region" description="Low complexity" evidence="2">
    <location>
        <begin position="330"/>
        <end position="340"/>
    </location>
</feature>
<feature type="compositionally biased region" description="Low complexity" evidence="2">
    <location>
        <begin position="513"/>
        <end position="528"/>
    </location>
</feature>
<feature type="lipid moiety-binding region" description="N-palmitoyl cysteine" evidence="1">
    <location>
        <position position="27"/>
    </location>
</feature>
<feature type="lipid moiety-binding region" description="S-diacylglycerol cysteine" evidence="1">
    <location>
        <position position="27"/>
    </location>
</feature>